<proteinExistence type="inferred from homology"/>
<dbReference type="EC" id="5.4.2.10" evidence="1"/>
<dbReference type="EMBL" id="CU928160">
    <property type="protein sequence ID" value="CAR00138.1"/>
    <property type="molecule type" value="Genomic_DNA"/>
</dbReference>
<dbReference type="RefSeq" id="WP_000071134.1">
    <property type="nucleotide sequence ID" value="NC_011741.1"/>
</dbReference>
<dbReference type="SMR" id="B7M082"/>
<dbReference type="GeneID" id="75206032"/>
<dbReference type="KEGG" id="ecr:ECIAI1_3324"/>
<dbReference type="HOGENOM" id="CLU_016950_7_0_6"/>
<dbReference type="GO" id="GO:0005829">
    <property type="term" value="C:cytosol"/>
    <property type="evidence" value="ECO:0007669"/>
    <property type="project" value="TreeGrafter"/>
</dbReference>
<dbReference type="GO" id="GO:0000287">
    <property type="term" value="F:magnesium ion binding"/>
    <property type="evidence" value="ECO:0007669"/>
    <property type="project" value="UniProtKB-UniRule"/>
</dbReference>
<dbReference type="GO" id="GO:0008966">
    <property type="term" value="F:phosphoglucosamine mutase activity"/>
    <property type="evidence" value="ECO:0007669"/>
    <property type="project" value="UniProtKB-UniRule"/>
</dbReference>
<dbReference type="GO" id="GO:0004615">
    <property type="term" value="F:phosphomannomutase activity"/>
    <property type="evidence" value="ECO:0007669"/>
    <property type="project" value="TreeGrafter"/>
</dbReference>
<dbReference type="GO" id="GO:0005975">
    <property type="term" value="P:carbohydrate metabolic process"/>
    <property type="evidence" value="ECO:0007669"/>
    <property type="project" value="InterPro"/>
</dbReference>
<dbReference type="GO" id="GO:0009252">
    <property type="term" value="P:peptidoglycan biosynthetic process"/>
    <property type="evidence" value="ECO:0007669"/>
    <property type="project" value="TreeGrafter"/>
</dbReference>
<dbReference type="GO" id="GO:0006048">
    <property type="term" value="P:UDP-N-acetylglucosamine biosynthetic process"/>
    <property type="evidence" value="ECO:0007669"/>
    <property type="project" value="TreeGrafter"/>
</dbReference>
<dbReference type="CDD" id="cd05802">
    <property type="entry name" value="GlmM"/>
    <property type="match status" value="1"/>
</dbReference>
<dbReference type="FunFam" id="3.30.310.50:FF:000001">
    <property type="entry name" value="Phosphoglucosamine mutase"/>
    <property type="match status" value="1"/>
</dbReference>
<dbReference type="FunFam" id="3.40.120.10:FF:000001">
    <property type="entry name" value="Phosphoglucosamine mutase"/>
    <property type="match status" value="1"/>
</dbReference>
<dbReference type="FunFam" id="3.40.120.10:FF:000002">
    <property type="entry name" value="Phosphoglucosamine mutase"/>
    <property type="match status" value="1"/>
</dbReference>
<dbReference type="Gene3D" id="3.40.120.10">
    <property type="entry name" value="Alpha-D-Glucose-1,6-Bisphosphate, subunit A, domain 3"/>
    <property type="match status" value="3"/>
</dbReference>
<dbReference type="Gene3D" id="3.30.310.50">
    <property type="entry name" value="Alpha-D-phosphohexomutase, C-terminal domain"/>
    <property type="match status" value="1"/>
</dbReference>
<dbReference type="HAMAP" id="MF_01554_B">
    <property type="entry name" value="GlmM_B"/>
    <property type="match status" value="1"/>
</dbReference>
<dbReference type="InterPro" id="IPR005844">
    <property type="entry name" value="A-D-PHexomutase_a/b/a-I"/>
</dbReference>
<dbReference type="InterPro" id="IPR016055">
    <property type="entry name" value="A-D-PHexomutase_a/b/a-I/II/III"/>
</dbReference>
<dbReference type="InterPro" id="IPR005845">
    <property type="entry name" value="A-D-PHexomutase_a/b/a-II"/>
</dbReference>
<dbReference type="InterPro" id="IPR005846">
    <property type="entry name" value="A-D-PHexomutase_a/b/a-III"/>
</dbReference>
<dbReference type="InterPro" id="IPR005843">
    <property type="entry name" value="A-D-PHexomutase_C"/>
</dbReference>
<dbReference type="InterPro" id="IPR036900">
    <property type="entry name" value="A-D-PHexomutase_C_sf"/>
</dbReference>
<dbReference type="InterPro" id="IPR016066">
    <property type="entry name" value="A-D-PHexomutase_CS"/>
</dbReference>
<dbReference type="InterPro" id="IPR005841">
    <property type="entry name" value="Alpha-D-phosphohexomutase_SF"/>
</dbReference>
<dbReference type="InterPro" id="IPR006352">
    <property type="entry name" value="GlmM_bact"/>
</dbReference>
<dbReference type="InterPro" id="IPR050060">
    <property type="entry name" value="Phosphoglucosamine_mutase"/>
</dbReference>
<dbReference type="NCBIfam" id="TIGR01455">
    <property type="entry name" value="glmM"/>
    <property type="match status" value="1"/>
</dbReference>
<dbReference type="NCBIfam" id="NF008139">
    <property type="entry name" value="PRK10887.1"/>
    <property type="match status" value="1"/>
</dbReference>
<dbReference type="PANTHER" id="PTHR42946:SF1">
    <property type="entry name" value="PHOSPHOGLUCOMUTASE (ALPHA-D-GLUCOSE-1,6-BISPHOSPHATE-DEPENDENT)"/>
    <property type="match status" value="1"/>
</dbReference>
<dbReference type="PANTHER" id="PTHR42946">
    <property type="entry name" value="PHOSPHOHEXOSE MUTASE"/>
    <property type="match status" value="1"/>
</dbReference>
<dbReference type="Pfam" id="PF02878">
    <property type="entry name" value="PGM_PMM_I"/>
    <property type="match status" value="1"/>
</dbReference>
<dbReference type="Pfam" id="PF02879">
    <property type="entry name" value="PGM_PMM_II"/>
    <property type="match status" value="1"/>
</dbReference>
<dbReference type="Pfam" id="PF02880">
    <property type="entry name" value="PGM_PMM_III"/>
    <property type="match status" value="1"/>
</dbReference>
<dbReference type="Pfam" id="PF00408">
    <property type="entry name" value="PGM_PMM_IV"/>
    <property type="match status" value="1"/>
</dbReference>
<dbReference type="PRINTS" id="PR00509">
    <property type="entry name" value="PGMPMM"/>
</dbReference>
<dbReference type="SUPFAM" id="SSF55957">
    <property type="entry name" value="Phosphoglucomutase, C-terminal domain"/>
    <property type="match status" value="1"/>
</dbReference>
<dbReference type="SUPFAM" id="SSF53738">
    <property type="entry name" value="Phosphoglucomutase, first 3 domains"/>
    <property type="match status" value="3"/>
</dbReference>
<dbReference type="PROSITE" id="PS00710">
    <property type="entry name" value="PGM_PMM"/>
    <property type="match status" value="1"/>
</dbReference>
<protein>
    <recommendedName>
        <fullName evidence="1">Phosphoglucosamine mutase</fullName>
        <ecNumber evidence="1">5.4.2.10</ecNumber>
    </recommendedName>
</protein>
<gene>
    <name evidence="1" type="primary">glmM</name>
    <name type="ordered locus">ECIAI1_3324</name>
</gene>
<evidence type="ECO:0000255" key="1">
    <source>
        <dbReference type="HAMAP-Rule" id="MF_01554"/>
    </source>
</evidence>
<reference key="1">
    <citation type="journal article" date="2009" name="PLoS Genet.">
        <title>Organised genome dynamics in the Escherichia coli species results in highly diverse adaptive paths.</title>
        <authorList>
            <person name="Touchon M."/>
            <person name="Hoede C."/>
            <person name="Tenaillon O."/>
            <person name="Barbe V."/>
            <person name="Baeriswyl S."/>
            <person name="Bidet P."/>
            <person name="Bingen E."/>
            <person name="Bonacorsi S."/>
            <person name="Bouchier C."/>
            <person name="Bouvet O."/>
            <person name="Calteau A."/>
            <person name="Chiapello H."/>
            <person name="Clermont O."/>
            <person name="Cruveiller S."/>
            <person name="Danchin A."/>
            <person name="Diard M."/>
            <person name="Dossat C."/>
            <person name="Karoui M.E."/>
            <person name="Frapy E."/>
            <person name="Garry L."/>
            <person name="Ghigo J.M."/>
            <person name="Gilles A.M."/>
            <person name="Johnson J."/>
            <person name="Le Bouguenec C."/>
            <person name="Lescat M."/>
            <person name="Mangenot S."/>
            <person name="Martinez-Jehanne V."/>
            <person name="Matic I."/>
            <person name="Nassif X."/>
            <person name="Oztas S."/>
            <person name="Petit M.A."/>
            <person name="Pichon C."/>
            <person name="Rouy Z."/>
            <person name="Ruf C.S."/>
            <person name="Schneider D."/>
            <person name="Tourret J."/>
            <person name="Vacherie B."/>
            <person name="Vallenet D."/>
            <person name="Medigue C."/>
            <person name="Rocha E.P.C."/>
            <person name="Denamur E."/>
        </authorList>
    </citation>
    <scope>NUCLEOTIDE SEQUENCE [LARGE SCALE GENOMIC DNA]</scope>
    <source>
        <strain>IAI1</strain>
    </source>
</reference>
<keyword id="KW-0413">Isomerase</keyword>
<keyword id="KW-0460">Magnesium</keyword>
<keyword id="KW-0479">Metal-binding</keyword>
<keyword id="KW-0597">Phosphoprotein</keyword>
<name>GLMM_ECO8A</name>
<feature type="chain" id="PRO_1000201097" description="Phosphoglucosamine mutase">
    <location>
        <begin position="1"/>
        <end position="445"/>
    </location>
</feature>
<feature type="active site" description="Phosphoserine intermediate" evidence="1">
    <location>
        <position position="102"/>
    </location>
</feature>
<feature type="binding site" description="via phosphate group" evidence="1">
    <location>
        <position position="102"/>
    </location>
    <ligand>
        <name>Mg(2+)</name>
        <dbReference type="ChEBI" id="CHEBI:18420"/>
    </ligand>
</feature>
<feature type="binding site" evidence="1">
    <location>
        <position position="241"/>
    </location>
    <ligand>
        <name>Mg(2+)</name>
        <dbReference type="ChEBI" id="CHEBI:18420"/>
    </ligand>
</feature>
<feature type="binding site" evidence="1">
    <location>
        <position position="243"/>
    </location>
    <ligand>
        <name>Mg(2+)</name>
        <dbReference type="ChEBI" id="CHEBI:18420"/>
    </ligand>
</feature>
<feature type="binding site" evidence="1">
    <location>
        <position position="245"/>
    </location>
    <ligand>
        <name>Mg(2+)</name>
        <dbReference type="ChEBI" id="CHEBI:18420"/>
    </ligand>
</feature>
<feature type="modified residue" description="Phosphoserine" evidence="1">
    <location>
        <position position="102"/>
    </location>
</feature>
<organism>
    <name type="scientific">Escherichia coli O8 (strain IAI1)</name>
    <dbReference type="NCBI Taxonomy" id="585034"/>
    <lineage>
        <taxon>Bacteria</taxon>
        <taxon>Pseudomonadati</taxon>
        <taxon>Pseudomonadota</taxon>
        <taxon>Gammaproteobacteria</taxon>
        <taxon>Enterobacterales</taxon>
        <taxon>Enterobacteriaceae</taxon>
        <taxon>Escherichia</taxon>
    </lineage>
</organism>
<accession>B7M082</accession>
<comment type="function">
    <text evidence="1">Catalyzes the conversion of glucosamine-6-phosphate to glucosamine-1-phosphate.</text>
</comment>
<comment type="catalytic activity">
    <reaction evidence="1">
        <text>alpha-D-glucosamine 1-phosphate = D-glucosamine 6-phosphate</text>
        <dbReference type="Rhea" id="RHEA:23424"/>
        <dbReference type="ChEBI" id="CHEBI:58516"/>
        <dbReference type="ChEBI" id="CHEBI:58725"/>
        <dbReference type="EC" id="5.4.2.10"/>
    </reaction>
</comment>
<comment type="cofactor">
    <cofactor evidence="1">
        <name>Mg(2+)</name>
        <dbReference type="ChEBI" id="CHEBI:18420"/>
    </cofactor>
    <text evidence="1">Binds 1 Mg(2+) ion per subunit.</text>
</comment>
<comment type="PTM">
    <text evidence="1">Activated by phosphorylation.</text>
</comment>
<comment type="similarity">
    <text evidence="1">Belongs to the phosphohexose mutase family.</text>
</comment>
<sequence>MSNRKYFGTDGIRGRVGDAPITPDFVLKLGWAAGKVLARHGSRKIIIGKDTRISGYMLESALEAGLAAAGLSALFTGPMPTPAVAYLTRTFRAEAGIVISASHNPFYDNGIKFFSIDGTKLPDAVEEAIEAEMEKEISCVDSAELGKASRIVDAAGRYIEFCKATFPNELSLSELKIVVDCANGATYHIAPNVLRELGANVIAIGCEPNGVNINAEVGATDVRALQARVLAEKADLGIAFDGDGDRVIMVDHEGNKVDGDQIMYIIAREGLRQGQLRGGAVGTLMSNMGLELALKQLGIPFARAKVGDRYVLEKMQEKGWRIGAENSGHVILLDKTTTGDGIVAGLQVLAAMARNHMSLHDLCSGMKMFPQILVNVRYTAGSGDPLEHESVKAVTAEVEAALGNRGRVLLRKSGTEPLIRVMVEGEDEAQVTEFAHRIADAVKAV</sequence>